<name>CISY_RAT</name>
<sequence length="466" mass="51867">MALLTAAARLLGAKNSSCLVLAARHASASSTNLKDILSNLIPKEQARVKTFRQQHGKTVVGQITVDMMYGGMRGMKGLVYETSVLDPDEGIRFRGYSIPECQKLLPKAKGGEEPLPEGLFWLLVTGQMPTEEQVSWLSQEWAKRAALPSHVVTMLDNFPTNLHPMSQLSAAITALNSESNFARAYAEGINRTKYWELIYEDCMDLIAKLPCVAAKIYRNLYREGSSIGAIDSKLDWSHNFTNMLCYTEPQFTELMRLYLTIHSDHDGGNVSAHTSHLVGSALSDTYLSFAAAMNGLAGPLHGLANQEVLVWLTQLQKEVGKDVSDEKLRDYIWNTLNSGRVVPGYGHAVLRKTDPRYSCQREFALKHLPKDPMFKLVAQLYKIVPNILLEQGKAKNPWPNVDAHSGVLLQYYGMTEMNYYTVLFGVSRALGVLAQLIWSRALGFPLERPKSMSTDGLMKFVDSKSG</sequence>
<keyword id="KW-0007">Acetylation</keyword>
<keyword id="KW-0903">Direct protein sequencing</keyword>
<keyword id="KW-0488">Methylation</keyword>
<keyword id="KW-0496">Mitochondrion</keyword>
<keyword id="KW-0597">Phosphoprotein</keyword>
<keyword id="KW-1185">Reference proteome</keyword>
<keyword id="KW-0808">Transferase</keyword>
<keyword id="KW-0809">Transit peptide</keyword>
<keyword id="KW-0816">Tricarboxylic acid cycle</keyword>
<keyword id="KW-0832">Ubl conjugation</keyword>
<evidence type="ECO:0000250" key="1"/>
<evidence type="ECO:0000250" key="2">
    <source>
        <dbReference type="UniProtKB" id="O75390"/>
    </source>
</evidence>
<evidence type="ECO:0000250" key="3">
    <source>
        <dbReference type="UniProtKB" id="P00889"/>
    </source>
</evidence>
<evidence type="ECO:0000250" key="4">
    <source>
        <dbReference type="UniProtKB" id="Q29RK1"/>
    </source>
</evidence>
<evidence type="ECO:0000250" key="5">
    <source>
        <dbReference type="UniProtKB" id="Q9CZU6"/>
    </source>
</evidence>
<evidence type="ECO:0000255" key="6">
    <source>
        <dbReference type="PROSITE-ProRule" id="PRU10117"/>
    </source>
</evidence>
<evidence type="ECO:0000269" key="7">
    <source>
    </source>
</evidence>
<evidence type="ECO:0000305" key="8"/>
<feature type="transit peptide" description="Mitochondrion" evidence="1">
    <location>
        <begin position="1"/>
        <end position="27"/>
    </location>
</feature>
<feature type="chain" id="PRO_0000253899" description="Citrate synthase, mitochondrial">
    <location>
        <begin position="28"/>
        <end position="466"/>
    </location>
</feature>
<feature type="short sequence motif" description="SIFI-degron" evidence="2">
    <location>
        <begin position="2"/>
        <end position="21"/>
    </location>
</feature>
<feature type="active site" evidence="6">
    <location>
        <position position="301"/>
    </location>
</feature>
<feature type="active site" evidence="6">
    <location>
        <position position="347"/>
    </location>
</feature>
<feature type="active site" evidence="6">
    <location>
        <position position="402"/>
    </location>
</feature>
<feature type="binding site" description="in chain A" evidence="2">
    <location>
        <position position="356"/>
    </location>
    <ligand>
        <name>oxaloacetate</name>
        <dbReference type="ChEBI" id="CHEBI:16452"/>
        <note>ligand shared between homodimeric partners</note>
    </ligand>
</feature>
<feature type="binding site" description="in chain A" evidence="2">
    <location>
        <position position="428"/>
    </location>
    <ligand>
        <name>oxaloacetate</name>
        <dbReference type="ChEBI" id="CHEBI:16452"/>
        <note>ligand shared between homodimeric partners</note>
    </ligand>
</feature>
<feature type="binding site" description="in chain B" evidence="2">
    <location>
        <position position="448"/>
    </location>
    <ligand>
        <name>oxaloacetate</name>
        <dbReference type="ChEBI" id="CHEBI:16452"/>
        <note>ligand shared between homodimeric partners</note>
    </ligand>
</feature>
<feature type="modified residue" description="N6-succinyllysine" evidence="5">
    <location>
        <position position="57"/>
    </location>
</feature>
<feature type="modified residue" description="N6-acetyllysine; alternate" evidence="4">
    <location>
        <position position="76"/>
    </location>
</feature>
<feature type="modified residue" description="N6-succinyllysine; alternate" evidence="4">
    <location>
        <position position="76"/>
    </location>
</feature>
<feature type="modified residue" description="N6-succinyllysine" evidence="5">
    <location>
        <position position="103"/>
    </location>
</feature>
<feature type="modified residue" description="N6-succinyllysine" evidence="5">
    <location>
        <position position="193"/>
    </location>
</feature>
<feature type="modified residue" description="Phosphoserine" evidence="5">
    <location>
        <position position="226"/>
    </location>
</feature>
<feature type="modified residue" description="N6-acetyllysine; alternate" evidence="5">
    <location>
        <position position="321"/>
    </location>
</feature>
<feature type="modified residue" description="N6-succinyllysine; alternate" evidence="5">
    <location>
        <position position="321"/>
    </location>
</feature>
<feature type="modified residue" description="N6-acetyllysine; alternate" evidence="2">
    <location>
        <position position="327"/>
    </location>
</feature>
<feature type="modified residue" description="N6-succinyllysine; alternate" evidence="5">
    <location>
        <position position="327"/>
    </location>
</feature>
<feature type="modified residue" description="N6-acetyllysine; alternate" evidence="2">
    <location>
        <position position="375"/>
    </location>
</feature>
<feature type="modified residue" description="N6-succinyllysine; alternate" evidence="5">
    <location>
        <position position="375"/>
    </location>
</feature>
<feature type="modified residue" description="N6-acetyllysine" evidence="2">
    <location>
        <position position="382"/>
    </location>
</feature>
<feature type="modified residue" description="N6-acetyllysine; alternate" evidence="2">
    <location>
        <position position="393"/>
    </location>
</feature>
<feature type="modified residue" description="N6-succinyllysine; alternate" evidence="5">
    <location>
        <position position="393"/>
    </location>
</feature>
<feature type="modified residue" description="N6,N6,N6-trimethyllysine" evidence="2">
    <location>
        <position position="395"/>
    </location>
</feature>
<feature type="modified residue" description="N6-succinyllysine" evidence="5">
    <location>
        <position position="450"/>
    </location>
</feature>
<feature type="modified residue" description="N6-acetyllysine; alternate" evidence="5">
    <location>
        <position position="459"/>
    </location>
</feature>
<feature type="modified residue" description="N6-succinyllysine; alternate" evidence="5">
    <location>
        <position position="459"/>
    </location>
</feature>
<accession>Q8VHF5</accession>
<proteinExistence type="evidence at protein level"/>
<comment type="function">
    <text evidence="8">Key enzyme of the Krebs tricarboxylic acid cycle which catalyzes the synthesis of citrate from acetyl coenzyme A and oxaloacetate.</text>
</comment>
<comment type="catalytic activity">
    <reaction evidence="6">
        <text>oxaloacetate + acetyl-CoA + H2O = citrate + CoA + H(+)</text>
        <dbReference type="Rhea" id="RHEA:16845"/>
        <dbReference type="ChEBI" id="CHEBI:15377"/>
        <dbReference type="ChEBI" id="CHEBI:15378"/>
        <dbReference type="ChEBI" id="CHEBI:16452"/>
        <dbReference type="ChEBI" id="CHEBI:16947"/>
        <dbReference type="ChEBI" id="CHEBI:57287"/>
        <dbReference type="ChEBI" id="CHEBI:57288"/>
        <dbReference type="EC" id="2.3.3.1"/>
    </reaction>
</comment>
<comment type="pathway">
    <text>Carbohydrate metabolism; tricarboxylic acid cycle; isocitrate from oxaloacetate: step 1/2.</text>
</comment>
<comment type="subunit">
    <text evidence="2">Homodimer.</text>
</comment>
<comment type="subcellular location">
    <subcellularLocation>
        <location evidence="3">Mitochondrion matrix</location>
    </subcellularLocation>
</comment>
<comment type="tissue specificity">
    <text evidence="7">Expressed in the head region and flagellum of epididymal sperm.</text>
</comment>
<comment type="PTM">
    <text evidence="2">Methylated. Trimethylation at Lys-395 by CSKMT decreases citrate synthase activity.</text>
</comment>
<comment type="PTM">
    <text evidence="2">In response to mitochondrial stress, the precursor protein is ubiquitinated by the SIFI complex in the cytoplasm before mitochondrial import, leading to its degradation. Within the SIFI complex, UBR4 initiates ubiquitin chain that are further elongated or branched by KCMF1.</text>
</comment>
<comment type="miscellaneous">
    <text>Citrate synthase is found in nearly all cells capable of oxidative metabolism.</text>
</comment>
<comment type="similarity">
    <text evidence="8">Belongs to the citrate synthase family.</text>
</comment>
<reference key="1">
    <citation type="submission" date="2001-12" db="EMBL/GenBank/DDBJ databases">
        <title>Rattus norvegicus citrate synthase cDNA.</title>
        <authorList>
            <person name="Rossignol F."/>
            <person name="Jouaville L."/>
            <person name="Mounier R."/>
            <person name="Clottes E."/>
        </authorList>
    </citation>
    <scope>NUCLEOTIDE SEQUENCE [MRNA]</scope>
    <source>
        <tissue>Testis</tissue>
    </source>
</reference>
<reference key="2">
    <citation type="submission" date="2007-07" db="UniProtKB">
        <authorList>
            <person name="Lubec G."/>
            <person name="Kang S.U."/>
        </authorList>
    </citation>
    <scope>PROTEIN SEQUENCE OF 77-92; 184-191; 209-215; 223-233; 330-340; 383-393 AND 429-440</scope>
    <scope>IDENTIFICATION BY MASS SPECTROMETRY</scope>
    <source>
        <strain>Sprague-Dawley</strain>
        <tissue>Brain</tissue>
    </source>
</reference>
<reference key="3">
    <citation type="journal article" date="2009" name="Reproduction">
        <title>Identification of novel immunodominant epididymal sperm proteins using combinatorial approach.</title>
        <authorList>
            <person name="Khan S.A."/>
            <person name="Suryawanshi A.R."/>
            <person name="Ranpura S.A."/>
            <person name="Jadhav S.V."/>
            <person name="Khole V.V."/>
        </authorList>
    </citation>
    <scope>IDENTIFICATION BY MASS SPECTROMETRY</scope>
    <scope>TISSUE SPECIFICITY</scope>
</reference>
<organism>
    <name type="scientific">Rattus norvegicus</name>
    <name type="common">Rat</name>
    <dbReference type="NCBI Taxonomy" id="10116"/>
    <lineage>
        <taxon>Eukaryota</taxon>
        <taxon>Metazoa</taxon>
        <taxon>Chordata</taxon>
        <taxon>Craniata</taxon>
        <taxon>Vertebrata</taxon>
        <taxon>Euteleostomi</taxon>
        <taxon>Mammalia</taxon>
        <taxon>Eutheria</taxon>
        <taxon>Euarchontoglires</taxon>
        <taxon>Glires</taxon>
        <taxon>Rodentia</taxon>
        <taxon>Myomorpha</taxon>
        <taxon>Muroidea</taxon>
        <taxon>Muridae</taxon>
        <taxon>Murinae</taxon>
        <taxon>Rattus</taxon>
    </lineage>
</organism>
<protein>
    <recommendedName>
        <fullName>Citrate synthase, mitochondrial</fullName>
        <ecNumber>2.3.3.1</ecNumber>
    </recommendedName>
    <alternativeName>
        <fullName>Citrate (Si)-synthase</fullName>
    </alternativeName>
</protein>
<dbReference type="EC" id="2.3.3.1"/>
<dbReference type="EMBL" id="AF461496">
    <property type="protein sequence ID" value="AAL66372.1"/>
    <property type="molecule type" value="mRNA"/>
</dbReference>
<dbReference type="RefSeq" id="NP_570111.1">
    <property type="nucleotide sequence ID" value="NM_130755.1"/>
</dbReference>
<dbReference type="SMR" id="Q8VHF5"/>
<dbReference type="BioGRID" id="250939">
    <property type="interactions" value="3"/>
</dbReference>
<dbReference type="FunCoup" id="Q8VHF5">
    <property type="interactions" value="2799"/>
</dbReference>
<dbReference type="IntAct" id="Q8VHF5">
    <property type="interactions" value="4"/>
</dbReference>
<dbReference type="MINT" id="Q8VHF5"/>
<dbReference type="STRING" id="10116.ENSRNOP00000034921"/>
<dbReference type="GlyGen" id="Q8VHF5">
    <property type="glycosylation" value="3 sites, 1 O-linked glycan (3 sites)"/>
</dbReference>
<dbReference type="iPTMnet" id="Q8VHF5"/>
<dbReference type="PhosphoSitePlus" id="Q8VHF5"/>
<dbReference type="SwissPalm" id="Q8VHF5"/>
<dbReference type="jPOST" id="Q8VHF5"/>
<dbReference type="PaxDb" id="10116-ENSRNOP00000034921"/>
<dbReference type="GeneID" id="170587"/>
<dbReference type="KEGG" id="rno:170587"/>
<dbReference type="UCSC" id="RGD:620330">
    <property type="organism name" value="rat"/>
</dbReference>
<dbReference type="AGR" id="RGD:620330"/>
<dbReference type="CTD" id="1431"/>
<dbReference type="RGD" id="620330">
    <property type="gene designation" value="Cs"/>
</dbReference>
<dbReference type="eggNOG" id="KOG2617">
    <property type="taxonomic scope" value="Eukaryota"/>
</dbReference>
<dbReference type="InParanoid" id="Q8VHF5"/>
<dbReference type="OrthoDB" id="11372at9989"/>
<dbReference type="PhylomeDB" id="Q8VHF5"/>
<dbReference type="Reactome" id="R-RNO-71403">
    <property type="pathway name" value="Citric acid cycle (TCA cycle)"/>
</dbReference>
<dbReference type="Reactome" id="R-RNO-9837999">
    <property type="pathway name" value="Mitochondrial protein degradation"/>
</dbReference>
<dbReference type="SABIO-RK" id="Q8VHF5"/>
<dbReference type="UniPathway" id="UPA00223">
    <property type="reaction ID" value="UER00717"/>
</dbReference>
<dbReference type="PRO" id="PR:Q8VHF5"/>
<dbReference type="Proteomes" id="UP000002494">
    <property type="component" value="Unplaced"/>
</dbReference>
<dbReference type="GO" id="GO:0005759">
    <property type="term" value="C:mitochondrial matrix"/>
    <property type="evidence" value="ECO:0000250"/>
    <property type="project" value="UniProtKB"/>
</dbReference>
<dbReference type="GO" id="GO:0005739">
    <property type="term" value="C:mitochondrion"/>
    <property type="evidence" value="ECO:0000314"/>
    <property type="project" value="MGI"/>
</dbReference>
<dbReference type="GO" id="GO:0046912">
    <property type="term" value="F:acyltransferase activity, acyl groups converted into alkyl on transfer"/>
    <property type="evidence" value="ECO:0000266"/>
    <property type="project" value="RGD"/>
</dbReference>
<dbReference type="GO" id="GO:0004108">
    <property type="term" value="F:citrate (Si)-synthase activity"/>
    <property type="evidence" value="ECO:0000314"/>
    <property type="project" value="MGI"/>
</dbReference>
<dbReference type="GO" id="GO:0036440">
    <property type="term" value="F:citrate synthase activity"/>
    <property type="evidence" value="ECO:0000266"/>
    <property type="project" value="RGD"/>
</dbReference>
<dbReference type="GO" id="GO:0042802">
    <property type="term" value="F:identical protein binding"/>
    <property type="evidence" value="ECO:0000250"/>
    <property type="project" value="UniProtKB"/>
</dbReference>
<dbReference type="GO" id="GO:0006084">
    <property type="term" value="P:acetyl-CoA metabolic process"/>
    <property type="evidence" value="ECO:0000314"/>
    <property type="project" value="RGD"/>
</dbReference>
<dbReference type="GO" id="GO:0005975">
    <property type="term" value="P:carbohydrate metabolic process"/>
    <property type="evidence" value="ECO:0000250"/>
    <property type="project" value="UniProtKB"/>
</dbReference>
<dbReference type="GO" id="GO:0006101">
    <property type="term" value="P:citrate metabolic process"/>
    <property type="evidence" value="ECO:0000314"/>
    <property type="project" value="RGD"/>
</dbReference>
<dbReference type="GO" id="GO:0007507">
    <property type="term" value="P:heart development"/>
    <property type="evidence" value="ECO:0000270"/>
    <property type="project" value="RGD"/>
</dbReference>
<dbReference type="GO" id="GO:0006107">
    <property type="term" value="P:oxaloacetate metabolic process"/>
    <property type="evidence" value="ECO:0000314"/>
    <property type="project" value="RGD"/>
</dbReference>
<dbReference type="GO" id="GO:0006099">
    <property type="term" value="P:tricarboxylic acid cycle"/>
    <property type="evidence" value="ECO:0000314"/>
    <property type="project" value="RGD"/>
</dbReference>
<dbReference type="CDD" id="cd06105">
    <property type="entry name" value="ScCit1-2_like"/>
    <property type="match status" value="1"/>
</dbReference>
<dbReference type="FunFam" id="1.10.230.10:FF:000001">
    <property type="entry name" value="Citrate synthase"/>
    <property type="match status" value="1"/>
</dbReference>
<dbReference type="FunFam" id="1.10.580.10:FF:000001">
    <property type="entry name" value="Citrate synthase"/>
    <property type="match status" value="1"/>
</dbReference>
<dbReference type="Gene3D" id="1.10.580.10">
    <property type="entry name" value="Citrate Synthase, domain 1"/>
    <property type="match status" value="1"/>
</dbReference>
<dbReference type="Gene3D" id="1.10.230.10">
    <property type="entry name" value="Cytochrome P450-Terp, domain 2"/>
    <property type="match status" value="1"/>
</dbReference>
<dbReference type="InterPro" id="IPR016142">
    <property type="entry name" value="Citrate_synth-like_lrg_a-sub"/>
</dbReference>
<dbReference type="InterPro" id="IPR016143">
    <property type="entry name" value="Citrate_synth-like_sm_a-sub"/>
</dbReference>
<dbReference type="InterPro" id="IPR002020">
    <property type="entry name" value="Citrate_synthase"/>
</dbReference>
<dbReference type="InterPro" id="IPR019810">
    <property type="entry name" value="Citrate_synthase_AS"/>
</dbReference>
<dbReference type="InterPro" id="IPR010109">
    <property type="entry name" value="Citrate_synthase_euk"/>
</dbReference>
<dbReference type="InterPro" id="IPR036969">
    <property type="entry name" value="Citrate_synthase_sf"/>
</dbReference>
<dbReference type="NCBIfam" id="TIGR01793">
    <property type="entry name" value="cit_synth_euk"/>
    <property type="match status" value="1"/>
</dbReference>
<dbReference type="NCBIfam" id="NF007128">
    <property type="entry name" value="PRK09569.1"/>
    <property type="match status" value="1"/>
</dbReference>
<dbReference type="PANTHER" id="PTHR11739">
    <property type="entry name" value="CITRATE SYNTHASE"/>
    <property type="match status" value="1"/>
</dbReference>
<dbReference type="PANTHER" id="PTHR11739:SF8">
    <property type="entry name" value="CITRATE SYNTHASE, MITOCHONDRIAL"/>
    <property type="match status" value="1"/>
</dbReference>
<dbReference type="Pfam" id="PF00285">
    <property type="entry name" value="Citrate_synt"/>
    <property type="match status" value="1"/>
</dbReference>
<dbReference type="PRINTS" id="PR00143">
    <property type="entry name" value="CITRTSNTHASE"/>
</dbReference>
<dbReference type="SUPFAM" id="SSF48256">
    <property type="entry name" value="Citrate synthase"/>
    <property type="match status" value="1"/>
</dbReference>
<dbReference type="PROSITE" id="PS00480">
    <property type="entry name" value="CITRATE_SYNTHASE"/>
    <property type="match status" value="1"/>
</dbReference>
<gene>
    <name type="primary">Cs</name>
</gene>